<evidence type="ECO:0000255" key="1">
    <source>
        <dbReference type="HAMAP-Rule" id="MF_01314"/>
    </source>
</evidence>
<dbReference type="EMBL" id="CU928160">
    <property type="protein sequence ID" value="CAQ99626.1"/>
    <property type="molecule type" value="Genomic_DNA"/>
</dbReference>
<dbReference type="RefSeq" id="WP_000010729.1">
    <property type="nucleotide sequence ID" value="NC_011741.1"/>
</dbReference>
<dbReference type="SMR" id="B7M9E6"/>
<dbReference type="KEGG" id="ecr:ECIAI1_2801"/>
<dbReference type="HOGENOM" id="CLU_000445_125_0_6"/>
<dbReference type="UniPathway" id="UPA00638"/>
<dbReference type="GO" id="GO:0005524">
    <property type="term" value="F:ATP binding"/>
    <property type="evidence" value="ECO:0007669"/>
    <property type="project" value="UniProtKB-UniRule"/>
</dbReference>
<dbReference type="GO" id="GO:0016887">
    <property type="term" value="F:ATP hydrolysis activity"/>
    <property type="evidence" value="ECO:0007669"/>
    <property type="project" value="InterPro"/>
</dbReference>
<dbReference type="GO" id="GO:0003677">
    <property type="term" value="F:DNA binding"/>
    <property type="evidence" value="ECO:0007669"/>
    <property type="project" value="UniProtKB-KW"/>
</dbReference>
<dbReference type="GO" id="GO:0003700">
    <property type="term" value="F:DNA-binding transcription factor activity"/>
    <property type="evidence" value="ECO:0007669"/>
    <property type="project" value="UniProtKB-UniRule"/>
</dbReference>
<dbReference type="GO" id="GO:0000160">
    <property type="term" value="P:phosphorelay signal transduction system"/>
    <property type="evidence" value="ECO:0007669"/>
    <property type="project" value="UniProtKB-UniRule"/>
</dbReference>
<dbReference type="CDD" id="cd00009">
    <property type="entry name" value="AAA"/>
    <property type="match status" value="1"/>
</dbReference>
<dbReference type="FunFam" id="1.10.10.60:FF:000188">
    <property type="entry name" value="Anaerobic nitric oxide reductase transcription regulator NorR"/>
    <property type="match status" value="1"/>
</dbReference>
<dbReference type="FunFam" id="1.10.8.60:FF:000045">
    <property type="entry name" value="Anaerobic nitric oxide reductase transcription regulator NorR"/>
    <property type="match status" value="1"/>
</dbReference>
<dbReference type="FunFam" id="3.30.450.40:FF:000021">
    <property type="entry name" value="Anaerobic nitric oxide reductase transcription regulator NorR"/>
    <property type="match status" value="1"/>
</dbReference>
<dbReference type="FunFam" id="3.40.50.300:FF:000006">
    <property type="entry name" value="DNA-binding transcriptional regulator NtrC"/>
    <property type="match status" value="1"/>
</dbReference>
<dbReference type="Gene3D" id="1.10.8.60">
    <property type="match status" value="1"/>
</dbReference>
<dbReference type="Gene3D" id="3.30.450.40">
    <property type="match status" value="1"/>
</dbReference>
<dbReference type="Gene3D" id="1.10.10.60">
    <property type="entry name" value="Homeodomain-like"/>
    <property type="match status" value="1"/>
</dbReference>
<dbReference type="Gene3D" id="3.40.50.300">
    <property type="entry name" value="P-loop containing nucleotide triphosphate hydrolases"/>
    <property type="match status" value="1"/>
</dbReference>
<dbReference type="HAMAP" id="MF_01314">
    <property type="entry name" value="NorR"/>
    <property type="match status" value="1"/>
</dbReference>
<dbReference type="InterPro" id="IPR003593">
    <property type="entry name" value="AAA+_ATPase"/>
</dbReference>
<dbReference type="InterPro" id="IPR003018">
    <property type="entry name" value="GAF"/>
</dbReference>
<dbReference type="InterPro" id="IPR029016">
    <property type="entry name" value="GAF-like_dom_sf"/>
</dbReference>
<dbReference type="InterPro" id="IPR009057">
    <property type="entry name" value="Homeodomain-like_sf"/>
</dbReference>
<dbReference type="InterPro" id="IPR023944">
    <property type="entry name" value="NorR"/>
</dbReference>
<dbReference type="InterPro" id="IPR027417">
    <property type="entry name" value="P-loop_NTPase"/>
</dbReference>
<dbReference type="InterPro" id="IPR002078">
    <property type="entry name" value="Sigma_54_int"/>
</dbReference>
<dbReference type="InterPro" id="IPR025662">
    <property type="entry name" value="Sigma_54_int_dom_ATP-bd_1"/>
</dbReference>
<dbReference type="InterPro" id="IPR025943">
    <property type="entry name" value="Sigma_54_int_dom_ATP-bd_2"/>
</dbReference>
<dbReference type="InterPro" id="IPR025944">
    <property type="entry name" value="Sigma_54_int_dom_CS"/>
</dbReference>
<dbReference type="NCBIfam" id="NF003451">
    <property type="entry name" value="PRK05022.1"/>
    <property type="match status" value="1"/>
</dbReference>
<dbReference type="PANTHER" id="PTHR32071:SF35">
    <property type="entry name" value="ANAEROBIC NITRIC OXIDE REDUCTASE TRANSCRIPTION REGULATOR NORR"/>
    <property type="match status" value="1"/>
</dbReference>
<dbReference type="PANTHER" id="PTHR32071">
    <property type="entry name" value="TRANSCRIPTIONAL REGULATORY PROTEIN"/>
    <property type="match status" value="1"/>
</dbReference>
<dbReference type="Pfam" id="PF01590">
    <property type="entry name" value="GAF"/>
    <property type="match status" value="1"/>
</dbReference>
<dbReference type="Pfam" id="PF00158">
    <property type="entry name" value="Sigma54_activat"/>
    <property type="match status" value="1"/>
</dbReference>
<dbReference type="SMART" id="SM00382">
    <property type="entry name" value="AAA"/>
    <property type="match status" value="1"/>
</dbReference>
<dbReference type="SMART" id="SM00065">
    <property type="entry name" value="GAF"/>
    <property type="match status" value="1"/>
</dbReference>
<dbReference type="SUPFAM" id="SSF55781">
    <property type="entry name" value="GAF domain-like"/>
    <property type="match status" value="1"/>
</dbReference>
<dbReference type="SUPFAM" id="SSF46689">
    <property type="entry name" value="Homeodomain-like"/>
    <property type="match status" value="1"/>
</dbReference>
<dbReference type="SUPFAM" id="SSF52540">
    <property type="entry name" value="P-loop containing nucleoside triphosphate hydrolases"/>
    <property type="match status" value="1"/>
</dbReference>
<dbReference type="PROSITE" id="PS00675">
    <property type="entry name" value="SIGMA54_INTERACT_1"/>
    <property type="match status" value="1"/>
</dbReference>
<dbReference type="PROSITE" id="PS00676">
    <property type="entry name" value="SIGMA54_INTERACT_2"/>
    <property type="match status" value="1"/>
</dbReference>
<dbReference type="PROSITE" id="PS00688">
    <property type="entry name" value="SIGMA54_INTERACT_3"/>
    <property type="match status" value="1"/>
</dbReference>
<dbReference type="PROSITE" id="PS50045">
    <property type="entry name" value="SIGMA54_INTERACT_4"/>
    <property type="match status" value="1"/>
</dbReference>
<name>NORR_ECO8A</name>
<accession>B7M9E6</accession>
<gene>
    <name evidence="1" type="primary">norR</name>
    <name type="ordered locus">ECIAI1_2801</name>
</gene>
<feature type="chain" id="PRO_1000141190" description="Anaerobic nitric oxide reductase transcription regulator NorR">
    <location>
        <begin position="1"/>
        <end position="504"/>
    </location>
</feature>
<feature type="domain" description="Sigma-54 factor interaction" evidence="1">
    <location>
        <begin position="187"/>
        <end position="416"/>
    </location>
</feature>
<feature type="DNA-binding region" description="H-T-H motif" evidence="1">
    <location>
        <begin position="479"/>
        <end position="498"/>
    </location>
</feature>
<feature type="binding site" evidence="1">
    <location>
        <begin position="215"/>
        <end position="222"/>
    </location>
    <ligand>
        <name>ATP</name>
        <dbReference type="ChEBI" id="CHEBI:30616"/>
    </ligand>
</feature>
<feature type="binding site" evidence="1">
    <location>
        <begin position="278"/>
        <end position="287"/>
    </location>
    <ligand>
        <name>ATP</name>
        <dbReference type="ChEBI" id="CHEBI:30616"/>
    </ligand>
</feature>
<feature type="modified residue" description="4-aspartylphosphate" evidence="1">
    <location>
        <position position="57"/>
    </location>
</feature>
<proteinExistence type="inferred from homology"/>
<comment type="function">
    <text evidence="1">Required for the expression of anaerobic nitric oxide (NO) reductase, acts as a transcriptional activator for at least the norVW operon. Activation also requires sigma-54.</text>
</comment>
<comment type="pathway">
    <text evidence="1">Nitrogen metabolism; nitric oxide reduction.</text>
</comment>
<keyword id="KW-0067">ATP-binding</keyword>
<keyword id="KW-0238">DNA-binding</keyword>
<keyword id="KW-0547">Nucleotide-binding</keyword>
<keyword id="KW-0597">Phosphoprotein</keyword>
<keyword id="KW-0804">Transcription</keyword>
<keyword id="KW-0805">Transcription regulation</keyword>
<organism>
    <name type="scientific">Escherichia coli O8 (strain IAI1)</name>
    <dbReference type="NCBI Taxonomy" id="585034"/>
    <lineage>
        <taxon>Bacteria</taxon>
        <taxon>Pseudomonadati</taxon>
        <taxon>Pseudomonadota</taxon>
        <taxon>Gammaproteobacteria</taxon>
        <taxon>Enterobacterales</taxon>
        <taxon>Enterobacteriaceae</taxon>
        <taxon>Escherichia</taxon>
    </lineage>
</organism>
<reference key="1">
    <citation type="journal article" date="2009" name="PLoS Genet.">
        <title>Organised genome dynamics in the Escherichia coli species results in highly diverse adaptive paths.</title>
        <authorList>
            <person name="Touchon M."/>
            <person name="Hoede C."/>
            <person name="Tenaillon O."/>
            <person name="Barbe V."/>
            <person name="Baeriswyl S."/>
            <person name="Bidet P."/>
            <person name="Bingen E."/>
            <person name="Bonacorsi S."/>
            <person name="Bouchier C."/>
            <person name="Bouvet O."/>
            <person name="Calteau A."/>
            <person name="Chiapello H."/>
            <person name="Clermont O."/>
            <person name="Cruveiller S."/>
            <person name="Danchin A."/>
            <person name="Diard M."/>
            <person name="Dossat C."/>
            <person name="Karoui M.E."/>
            <person name="Frapy E."/>
            <person name="Garry L."/>
            <person name="Ghigo J.M."/>
            <person name="Gilles A.M."/>
            <person name="Johnson J."/>
            <person name="Le Bouguenec C."/>
            <person name="Lescat M."/>
            <person name="Mangenot S."/>
            <person name="Martinez-Jehanne V."/>
            <person name="Matic I."/>
            <person name="Nassif X."/>
            <person name="Oztas S."/>
            <person name="Petit M.A."/>
            <person name="Pichon C."/>
            <person name="Rouy Z."/>
            <person name="Ruf C.S."/>
            <person name="Schneider D."/>
            <person name="Tourret J."/>
            <person name="Vacherie B."/>
            <person name="Vallenet D."/>
            <person name="Medigue C."/>
            <person name="Rocha E.P.C."/>
            <person name="Denamur E."/>
        </authorList>
    </citation>
    <scope>NUCLEOTIDE SEQUENCE [LARGE SCALE GENOMIC DNA]</scope>
    <source>
        <strain>IAI1</strain>
    </source>
</reference>
<protein>
    <recommendedName>
        <fullName evidence="1">Anaerobic nitric oxide reductase transcription regulator NorR</fullName>
    </recommendedName>
</protein>
<sequence>MSFSVDVLANIAIELQRGIGHQDRFQRLITTLRQVLECDASALLRYDSRQFIPLAIDGLAKDVLGRRFALEGHPRLEAIARAGDVVRFPADSELPDPYDGLIPGQESLKVHACVGLPLFAGQNLIGALTLDGMQPDQFDVFSDEELRLIAALAAGALSNALLIEQLESQNMLPGDAAPFEAVKQTQMIGLSPGMTQLKKEIEIVAASDLNVLISGETGTGKELVAKAIHEASPRAVNPLVYLNCAALPESVAESELFGHVKGAFTGAISNRSGKFEMADNGTLFLDEIGELSLALQAKLLRVLQYGDIQRVGDDRSLRVDVRVLAATNRDLREEVLAGRFRADLFHRLSVFPLSVPPLRERGDDVILLAGYFCEQCRLRLGLSRVVLSAGARNLLQHYRFPGNVRELEHAIHRAVVLARATRSGDEVILEAQHFAFPEVTLPPPEAAAVPVVKQNLREATEAFQRETIRQALAQNHHNWAACARMLETDVANLHRLAKRLGLKD</sequence>